<name>RPIA_METPP</name>
<evidence type="ECO:0000255" key="1">
    <source>
        <dbReference type="HAMAP-Rule" id="MF_00170"/>
    </source>
</evidence>
<comment type="function">
    <text evidence="1">Catalyzes the reversible conversion of ribose-5-phosphate to ribulose 5-phosphate.</text>
</comment>
<comment type="catalytic activity">
    <reaction evidence="1">
        <text>aldehydo-D-ribose 5-phosphate = D-ribulose 5-phosphate</text>
        <dbReference type="Rhea" id="RHEA:14657"/>
        <dbReference type="ChEBI" id="CHEBI:58121"/>
        <dbReference type="ChEBI" id="CHEBI:58273"/>
        <dbReference type="EC" id="5.3.1.6"/>
    </reaction>
</comment>
<comment type="pathway">
    <text evidence="1">Carbohydrate degradation; pentose phosphate pathway; D-ribose 5-phosphate from D-ribulose 5-phosphate (non-oxidative stage): step 1/1.</text>
</comment>
<comment type="subunit">
    <text evidence="1">Homodimer.</text>
</comment>
<comment type="similarity">
    <text evidence="1">Belongs to the ribose 5-phosphate isomerase family.</text>
</comment>
<keyword id="KW-0413">Isomerase</keyword>
<keyword id="KW-1185">Reference proteome</keyword>
<protein>
    <recommendedName>
        <fullName evidence="1">Ribose-5-phosphate isomerase A</fullName>
        <ecNumber evidence="1">5.3.1.6</ecNumber>
    </recommendedName>
    <alternativeName>
        <fullName evidence="1">Phosphoriboisomerase A</fullName>
        <shortName evidence="1">PRI</shortName>
    </alternativeName>
</protein>
<gene>
    <name evidence="1" type="primary">rpiA</name>
    <name type="ordered locus">Mpe_A2134</name>
</gene>
<reference key="1">
    <citation type="journal article" date="2007" name="J. Bacteriol.">
        <title>Whole-genome analysis of the methyl tert-butyl ether-degrading beta-proteobacterium Methylibium petroleiphilum PM1.</title>
        <authorList>
            <person name="Kane S.R."/>
            <person name="Chakicherla A.Y."/>
            <person name="Chain P.S.G."/>
            <person name="Schmidt R."/>
            <person name="Shin M.W."/>
            <person name="Legler T.C."/>
            <person name="Scow K.M."/>
            <person name="Larimer F.W."/>
            <person name="Lucas S.M."/>
            <person name="Richardson P.M."/>
            <person name="Hristova K.R."/>
        </authorList>
    </citation>
    <scope>NUCLEOTIDE SEQUENCE [LARGE SCALE GENOMIC DNA]</scope>
    <source>
        <strain>ATCC BAA-1232 / LMG 22953 / PM1</strain>
    </source>
</reference>
<accession>A2SHQ1</accession>
<organism>
    <name type="scientific">Methylibium petroleiphilum (strain ATCC BAA-1232 / LMG 22953 / PM1)</name>
    <dbReference type="NCBI Taxonomy" id="420662"/>
    <lineage>
        <taxon>Bacteria</taxon>
        <taxon>Pseudomonadati</taxon>
        <taxon>Pseudomonadota</taxon>
        <taxon>Betaproteobacteria</taxon>
        <taxon>Burkholderiales</taxon>
        <taxon>Sphaerotilaceae</taxon>
        <taxon>Methylibium</taxon>
    </lineage>
</organism>
<feature type="chain" id="PRO_1000077070" description="Ribose-5-phosphate isomerase A">
    <location>
        <begin position="1"/>
        <end position="219"/>
    </location>
</feature>
<feature type="active site" description="Proton acceptor" evidence="1">
    <location>
        <position position="103"/>
    </location>
</feature>
<feature type="binding site" evidence="1">
    <location>
        <begin position="28"/>
        <end position="31"/>
    </location>
    <ligand>
        <name>substrate</name>
    </ligand>
</feature>
<feature type="binding site" evidence="1">
    <location>
        <begin position="81"/>
        <end position="84"/>
    </location>
    <ligand>
        <name>substrate</name>
    </ligand>
</feature>
<feature type="binding site" evidence="1">
    <location>
        <begin position="94"/>
        <end position="97"/>
    </location>
    <ligand>
        <name>substrate</name>
    </ligand>
</feature>
<feature type="binding site" evidence="1">
    <location>
        <position position="121"/>
    </location>
    <ligand>
        <name>substrate</name>
    </ligand>
</feature>
<dbReference type="EC" id="5.3.1.6" evidence="1"/>
<dbReference type="EMBL" id="CP000555">
    <property type="protein sequence ID" value="ABM95090.1"/>
    <property type="molecule type" value="Genomic_DNA"/>
</dbReference>
<dbReference type="RefSeq" id="WP_011829727.1">
    <property type="nucleotide sequence ID" value="NC_008825.1"/>
</dbReference>
<dbReference type="SMR" id="A2SHQ1"/>
<dbReference type="STRING" id="420662.Mpe_A2134"/>
<dbReference type="KEGG" id="mpt:Mpe_A2134"/>
<dbReference type="eggNOG" id="COG0120">
    <property type="taxonomic scope" value="Bacteria"/>
</dbReference>
<dbReference type="HOGENOM" id="CLU_056590_1_1_4"/>
<dbReference type="UniPathway" id="UPA00115">
    <property type="reaction ID" value="UER00412"/>
</dbReference>
<dbReference type="Proteomes" id="UP000000366">
    <property type="component" value="Chromosome"/>
</dbReference>
<dbReference type="GO" id="GO:0005829">
    <property type="term" value="C:cytosol"/>
    <property type="evidence" value="ECO:0007669"/>
    <property type="project" value="TreeGrafter"/>
</dbReference>
<dbReference type="GO" id="GO:0004751">
    <property type="term" value="F:ribose-5-phosphate isomerase activity"/>
    <property type="evidence" value="ECO:0007669"/>
    <property type="project" value="UniProtKB-UniRule"/>
</dbReference>
<dbReference type="GO" id="GO:0006014">
    <property type="term" value="P:D-ribose metabolic process"/>
    <property type="evidence" value="ECO:0007669"/>
    <property type="project" value="TreeGrafter"/>
</dbReference>
<dbReference type="GO" id="GO:0009052">
    <property type="term" value="P:pentose-phosphate shunt, non-oxidative branch"/>
    <property type="evidence" value="ECO:0007669"/>
    <property type="project" value="UniProtKB-UniRule"/>
</dbReference>
<dbReference type="CDD" id="cd01398">
    <property type="entry name" value="RPI_A"/>
    <property type="match status" value="1"/>
</dbReference>
<dbReference type="FunFam" id="3.40.50.1360:FF:000001">
    <property type="entry name" value="Ribose-5-phosphate isomerase A"/>
    <property type="match status" value="1"/>
</dbReference>
<dbReference type="Gene3D" id="3.30.70.260">
    <property type="match status" value="1"/>
</dbReference>
<dbReference type="Gene3D" id="3.40.50.1360">
    <property type="match status" value="1"/>
</dbReference>
<dbReference type="HAMAP" id="MF_00170">
    <property type="entry name" value="Rib_5P_isom_A"/>
    <property type="match status" value="1"/>
</dbReference>
<dbReference type="InterPro" id="IPR037171">
    <property type="entry name" value="NagB/RpiA_transferase-like"/>
</dbReference>
<dbReference type="InterPro" id="IPR020672">
    <property type="entry name" value="Ribose5P_isomerase_typA_subgr"/>
</dbReference>
<dbReference type="InterPro" id="IPR004788">
    <property type="entry name" value="Ribose5P_isomerase_type_A"/>
</dbReference>
<dbReference type="NCBIfam" id="NF001924">
    <property type="entry name" value="PRK00702.1"/>
    <property type="match status" value="1"/>
</dbReference>
<dbReference type="NCBIfam" id="TIGR00021">
    <property type="entry name" value="rpiA"/>
    <property type="match status" value="1"/>
</dbReference>
<dbReference type="PANTHER" id="PTHR11934">
    <property type="entry name" value="RIBOSE-5-PHOSPHATE ISOMERASE"/>
    <property type="match status" value="1"/>
</dbReference>
<dbReference type="PANTHER" id="PTHR11934:SF0">
    <property type="entry name" value="RIBOSE-5-PHOSPHATE ISOMERASE"/>
    <property type="match status" value="1"/>
</dbReference>
<dbReference type="Pfam" id="PF06026">
    <property type="entry name" value="Rib_5-P_isom_A"/>
    <property type="match status" value="1"/>
</dbReference>
<dbReference type="SUPFAM" id="SSF75445">
    <property type="entry name" value="D-ribose-5-phosphate isomerase (RpiA), lid domain"/>
    <property type="match status" value="1"/>
</dbReference>
<dbReference type="SUPFAM" id="SSF100950">
    <property type="entry name" value="NagB/RpiA/CoA transferase-like"/>
    <property type="match status" value="1"/>
</dbReference>
<sequence>MNQDELKTLVGRAALEYVPEGSIVGVGTGSTVNCFIDALAGIKERIAGAVSSSVKSTERLREKGIRVFEAAAVESLPVYIDGADEIDPHGCMIKGGGAALTREKIVADLAERFVCIADASKLVDVLGRFPLPVEVLPMAVSQIQRRFAKLGATATVREGVITDNGQLILDVQGLRIGDPLAFETEVNQWPGVVTVGVFARHKASVCLLGTPEGVKTLRF</sequence>
<proteinExistence type="inferred from homology"/>